<organism>
    <name type="scientific">Brevibacillus brevis (strain 47 / JCM 6285 / NBRC 100599)</name>
    <dbReference type="NCBI Taxonomy" id="358681"/>
    <lineage>
        <taxon>Bacteria</taxon>
        <taxon>Bacillati</taxon>
        <taxon>Bacillota</taxon>
        <taxon>Bacilli</taxon>
        <taxon>Bacillales</taxon>
        <taxon>Paenibacillaceae</taxon>
        <taxon>Brevibacillus</taxon>
    </lineage>
</organism>
<reference key="1">
    <citation type="submission" date="2005-03" db="EMBL/GenBank/DDBJ databases">
        <title>Brevibacillus brevis strain 47, complete genome.</title>
        <authorList>
            <person name="Hosoyama A."/>
            <person name="Yamada R."/>
            <person name="Hongo Y."/>
            <person name="Terui Y."/>
            <person name="Ankai A."/>
            <person name="Masuyama W."/>
            <person name="Sekiguchi M."/>
            <person name="Takeda T."/>
            <person name="Asano K."/>
            <person name="Ohji S."/>
            <person name="Ichikawa N."/>
            <person name="Narita S."/>
            <person name="Aoki N."/>
            <person name="Miura H."/>
            <person name="Matsushita S."/>
            <person name="Sekigawa T."/>
            <person name="Yamagata H."/>
            <person name="Yoshikawa H."/>
            <person name="Udaka S."/>
            <person name="Tanikawa S."/>
            <person name="Fujita N."/>
        </authorList>
    </citation>
    <scope>NUCLEOTIDE SEQUENCE [LARGE SCALE GENOMIC DNA]</scope>
    <source>
        <strain>47 / JCM 6285 / NBRC 100599</strain>
    </source>
</reference>
<sequence length="340" mass="37529">MVKMYYEADVKQEVLRGKTIAIIGYGSQGHAQAQNLRDSGYKVVVGLRPGKSWDVAAKDGFEVLTVAEATKRADVVQILMPDERQAQVYRDEIAPNLKSGAALCFSHGFNIHYAQIVPPADVDVIMAAPKSPGHLVRRVYQEGFGVPGLIAIYQDATGNAKDLALAYSSGIGCTKAGVIETSFREETETDLFGEQAVLCGGASELVKAGFDTLVEAGYAPEIAYFECLHELKLIVDLMYEGGLARMRYSISDTAEYGDYSTGRRIITDETRKEMKKVLAEIQDGTFARNWILENQANRPGFTSRRRLESEHGIEVVGEQLRGMMSWINKDTKKEEVKIGQ</sequence>
<accession>C0Z9C7</accession>
<proteinExistence type="inferred from homology"/>
<feature type="chain" id="PRO_1000190914" description="Ketol-acid reductoisomerase (NADP(+))">
    <location>
        <begin position="1"/>
        <end position="340"/>
    </location>
</feature>
<feature type="domain" description="KARI N-terminal Rossmann" evidence="2">
    <location>
        <begin position="2"/>
        <end position="181"/>
    </location>
</feature>
<feature type="domain" description="KARI C-terminal knotted" evidence="3">
    <location>
        <begin position="182"/>
        <end position="327"/>
    </location>
</feature>
<feature type="active site" evidence="1">
    <location>
        <position position="107"/>
    </location>
</feature>
<feature type="binding site" evidence="1">
    <location>
        <begin position="25"/>
        <end position="28"/>
    </location>
    <ligand>
        <name>NADP(+)</name>
        <dbReference type="ChEBI" id="CHEBI:58349"/>
    </ligand>
</feature>
<feature type="binding site" evidence="1">
    <location>
        <position position="48"/>
    </location>
    <ligand>
        <name>NADP(+)</name>
        <dbReference type="ChEBI" id="CHEBI:58349"/>
    </ligand>
</feature>
<feature type="binding site" evidence="1">
    <location>
        <position position="52"/>
    </location>
    <ligand>
        <name>NADP(+)</name>
        <dbReference type="ChEBI" id="CHEBI:58349"/>
    </ligand>
</feature>
<feature type="binding site" evidence="1">
    <location>
        <begin position="82"/>
        <end position="85"/>
    </location>
    <ligand>
        <name>NADP(+)</name>
        <dbReference type="ChEBI" id="CHEBI:58349"/>
    </ligand>
</feature>
<feature type="binding site" evidence="1">
    <location>
        <position position="133"/>
    </location>
    <ligand>
        <name>NADP(+)</name>
        <dbReference type="ChEBI" id="CHEBI:58349"/>
    </ligand>
</feature>
<feature type="binding site" evidence="1">
    <location>
        <position position="190"/>
    </location>
    <ligand>
        <name>Mg(2+)</name>
        <dbReference type="ChEBI" id="CHEBI:18420"/>
        <label>1</label>
    </ligand>
</feature>
<feature type="binding site" evidence="1">
    <location>
        <position position="190"/>
    </location>
    <ligand>
        <name>Mg(2+)</name>
        <dbReference type="ChEBI" id="CHEBI:18420"/>
        <label>2</label>
    </ligand>
</feature>
<feature type="binding site" evidence="1">
    <location>
        <position position="194"/>
    </location>
    <ligand>
        <name>Mg(2+)</name>
        <dbReference type="ChEBI" id="CHEBI:18420"/>
        <label>1</label>
    </ligand>
</feature>
<feature type="binding site" evidence="1">
    <location>
        <position position="226"/>
    </location>
    <ligand>
        <name>Mg(2+)</name>
        <dbReference type="ChEBI" id="CHEBI:18420"/>
        <label>2</label>
    </ligand>
</feature>
<feature type="binding site" evidence="1">
    <location>
        <position position="230"/>
    </location>
    <ligand>
        <name>Mg(2+)</name>
        <dbReference type="ChEBI" id="CHEBI:18420"/>
        <label>2</label>
    </ligand>
</feature>
<feature type="binding site" evidence="1">
    <location>
        <position position="251"/>
    </location>
    <ligand>
        <name>substrate</name>
    </ligand>
</feature>
<gene>
    <name evidence="1" type="primary">ilvC</name>
    <name type="ordered locus">BBR47_16200</name>
</gene>
<comment type="function">
    <text evidence="1">Involved in the biosynthesis of branched-chain amino acids (BCAA). Catalyzes an alkyl-migration followed by a ketol-acid reduction of (S)-2-acetolactate (S2AL) to yield (R)-2,3-dihydroxy-isovalerate. In the isomerase reaction, S2AL is rearranged via a Mg-dependent methyl migration to produce 3-hydroxy-3-methyl-2-ketobutyrate (HMKB). In the reductase reaction, this 2-ketoacid undergoes a metal-dependent reduction by NADPH to yield (R)-2,3-dihydroxy-isovalerate.</text>
</comment>
<comment type="catalytic activity">
    <reaction evidence="1">
        <text>(2R)-2,3-dihydroxy-3-methylbutanoate + NADP(+) = (2S)-2-acetolactate + NADPH + H(+)</text>
        <dbReference type="Rhea" id="RHEA:22068"/>
        <dbReference type="ChEBI" id="CHEBI:15378"/>
        <dbReference type="ChEBI" id="CHEBI:49072"/>
        <dbReference type="ChEBI" id="CHEBI:57783"/>
        <dbReference type="ChEBI" id="CHEBI:58349"/>
        <dbReference type="ChEBI" id="CHEBI:58476"/>
        <dbReference type="EC" id="1.1.1.86"/>
    </reaction>
</comment>
<comment type="catalytic activity">
    <reaction evidence="1">
        <text>(2R,3R)-2,3-dihydroxy-3-methylpentanoate + NADP(+) = (S)-2-ethyl-2-hydroxy-3-oxobutanoate + NADPH + H(+)</text>
        <dbReference type="Rhea" id="RHEA:13493"/>
        <dbReference type="ChEBI" id="CHEBI:15378"/>
        <dbReference type="ChEBI" id="CHEBI:49256"/>
        <dbReference type="ChEBI" id="CHEBI:49258"/>
        <dbReference type="ChEBI" id="CHEBI:57783"/>
        <dbReference type="ChEBI" id="CHEBI:58349"/>
        <dbReference type="EC" id="1.1.1.86"/>
    </reaction>
</comment>
<comment type="cofactor">
    <cofactor evidence="1">
        <name>Mg(2+)</name>
        <dbReference type="ChEBI" id="CHEBI:18420"/>
    </cofactor>
    <text evidence="1">Binds 2 magnesium ions per subunit.</text>
</comment>
<comment type="pathway">
    <text evidence="1">Amino-acid biosynthesis; L-isoleucine biosynthesis; L-isoleucine from 2-oxobutanoate: step 2/4.</text>
</comment>
<comment type="pathway">
    <text evidence="1">Amino-acid biosynthesis; L-valine biosynthesis; L-valine from pyruvate: step 2/4.</text>
</comment>
<comment type="similarity">
    <text evidence="1">Belongs to the ketol-acid reductoisomerase family.</text>
</comment>
<evidence type="ECO:0000255" key="1">
    <source>
        <dbReference type="HAMAP-Rule" id="MF_00435"/>
    </source>
</evidence>
<evidence type="ECO:0000255" key="2">
    <source>
        <dbReference type="PROSITE-ProRule" id="PRU01197"/>
    </source>
</evidence>
<evidence type="ECO:0000255" key="3">
    <source>
        <dbReference type="PROSITE-ProRule" id="PRU01198"/>
    </source>
</evidence>
<keyword id="KW-0028">Amino-acid biosynthesis</keyword>
<keyword id="KW-0100">Branched-chain amino acid biosynthesis</keyword>
<keyword id="KW-0460">Magnesium</keyword>
<keyword id="KW-0479">Metal-binding</keyword>
<keyword id="KW-0521">NADP</keyword>
<keyword id="KW-0560">Oxidoreductase</keyword>
<keyword id="KW-1185">Reference proteome</keyword>
<protein>
    <recommendedName>
        <fullName evidence="1">Ketol-acid reductoisomerase (NADP(+))</fullName>
        <shortName evidence="1">KARI</shortName>
        <ecNumber evidence="1">1.1.1.86</ecNumber>
    </recommendedName>
    <alternativeName>
        <fullName evidence="1">Acetohydroxy-acid isomeroreductase</fullName>
        <shortName evidence="1">AHIR</shortName>
    </alternativeName>
    <alternativeName>
        <fullName evidence="1">Alpha-keto-beta-hydroxylacyl reductoisomerase</fullName>
    </alternativeName>
    <alternativeName>
        <fullName evidence="1">Ketol-acid reductoisomerase type 1</fullName>
    </alternativeName>
    <alternativeName>
        <fullName evidence="1">Ketol-acid reductoisomerase type I</fullName>
    </alternativeName>
</protein>
<dbReference type="EC" id="1.1.1.86" evidence="1"/>
<dbReference type="EMBL" id="AP008955">
    <property type="protein sequence ID" value="BAH42597.1"/>
    <property type="molecule type" value="Genomic_DNA"/>
</dbReference>
<dbReference type="RefSeq" id="WP_012685345.1">
    <property type="nucleotide sequence ID" value="NC_012491.1"/>
</dbReference>
<dbReference type="SMR" id="C0Z9C7"/>
<dbReference type="STRING" id="358681.BBR47_16200"/>
<dbReference type="KEGG" id="bbe:BBR47_16200"/>
<dbReference type="eggNOG" id="COG0059">
    <property type="taxonomic scope" value="Bacteria"/>
</dbReference>
<dbReference type="HOGENOM" id="CLU_033821_0_1_9"/>
<dbReference type="UniPathway" id="UPA00047">
    <property type="reaction ID" value="UER00056"/>
</dbReference>
<dbReference type="UniPathway" id="UPA00049">
    <property type="reaction ID" value="UER00060"/>
</dbReference>
<dbReference type="Proteomes" id="UP000001877">
    <property type="component" value="Chromosome"/>
</dbReference>
<dbReference type="GO" id="GO:0005829">
    <property type="term" value="C:cytosol"/>
    <property type="evidence" value="ECO:0007669"/>
    <property type="project" value="TreeGrafter"/>
</dbReference>
<dbReference type="GO" id="GO:0004455">
    <property type="term" value="F:ketol-acid reductoisomerase activity"/>
    <property type="evidence" value="ECO:0007669"/>
    <property type="project" value="UniProtKB-UniRule"/>
</dbReference>
<dbReference type="GO" id="GO:0000287">
    <property type="term" value="F:magnesium ion binding"/>
    <property type="evidence" value="ECO:0007669"/>
    <property type="project" value="UniProtKB-UniRule"/>
</dbReference>
<dbReference type="GO" id="GO:0050661">
    <property type="term" value="F:NADP binding"/>
    <property type="evidence" value="ECO:0007669"/>
    <property type="project" value="InterPro"/>
</dbReference>
<dbReference type="GO" id="GO:0009097">
    <property type="term" value="P:isoleucine biosynthetic process"/>
    <property type="evidence" value="ECO:0007669"/>
    <property type="project" value="UniProtKB-UniRule"/>
</dbReference>
<dbReference type="GO" id="GO:0009099">
    <property type="term" value="P:L-valine biosynthetic process"/>
    <property type="evidence" value="ECO:0007669"/>
    <property type="project" value="UniProtKB-UniRule"/>
</dbReference>
<dbReference type="FunFam" id="3.40.50.720:FF:000023">
    <property type="entry name" value="Ketol-acid reductoisomerase (NADP(+))"/>
    <property type="match status" value="1"/>
</dbReference>
<dbReference type="Gene3D" id="6.10.240.10">
    <property type="match status" value="1"/>
</dbReference>
<dbReference type="Gene3D" id="3.40.50.720">
    <property type="entry name" value="NAD(P)-binding Rossmann-like Domain"/>
    <property type="match status" value="1"/>
</dbReference>
<dbReference type="HAMAP" id="MF_00435">
    <property type="entry name" value="IlvC"/>
    <property type="match status" value="1"/>
</dbReference>
<dbReference type="InterPro" id="IPR008927">
    <property type="entry name" value="6-PGluconate_DH-like_C_sf"/>
</dbReference>
<dbReference type="InterPro" id="IPR013023">
    <property type="entry name" value="KARI"/>
</dbReference>
<dbReference type="InterPro" id="IPR000506">
    <property type="entry name" value="KARI_C"/>
</dbReference>
<dbReference type="InterPro" id="IPR013116">
    <property type="entry name" value="KARI_N"/>
</dbReference>
<dbReference type="InterPro" id="IPR014359">
    <property type="entry name" value="KARI_prok"/>
</dbReference>
<dbReference type="InterPro" id="IPR036291">
    <property type="entry name" value="NAD(P)-bd_dom_sf"/>
</dbReference>
<dbReference type="NCBIfam" id="TIGR00465">
    <property type="entry name" value="ilvC"/>
    <property type="match status" value="1"/>
</dbReference>
<dbReference type="NCBIfam" id="NF004017">
    <property type="entry name" value="PRK05479.1"/>
    <property type="match status" value="1"/>
</dbReference>
<dbReference type="NCBIfam" id="NF009940">
    <property type="entry name" value="PRK13403.1"/>
    <property type="match status" value="1"/>
</dbReference>
<dbReference type="PANTHER" id="PTHR21371">
    <property type="entry name" value="KETOL-ACID REDUCTOISOMERASE, MITOCHONDRIAL"/>
    <property type="match status" value="1"/>
</dbReference>
<dbReference type="PANTHER" id="PTHR21371:SF1">
    <property type="entry name" value="KETOL-ACID REDUCTOISOMERASE, MITOCHONDRIAL"/>
    <property type="match status" value="1"/>
</dbReference>
<dbReference type="Pfam" id="PF01450">
    <property type="entry name" value="KARI_C"/>
    <property type="match status" value="1"/>
</dbReference>
<dbReference type="Pfam" id="PF07991">
    <property type="entry name" value="KARI_N"/>
    <property type="match status" value="1"/>
</dbReference>
<dbReference type="PIRSF" id="PIRSF000116">
    <property type="entry name" value="IlvC_gammaproteo"/>
    <property type="match status" value="1"/>
</dbReference>
<dbReference type="SUPFAM" id="SSF48179">
    <property type="entry name" value="6-phosphogluconate dehydrogenase C-terminal domain-like"/>
    <property type="match status" value="1"/>
</dbReference>
<dbReference type="SUPFAM" id="SSF51735">
    <property type="entry name" value="NAD(P)-binding Rossmann-fold domains"/>
    <property type="match status" value="1"/>
</dbReference>
<dbReference type="PROSITE" id="PS51851">
    <property type="entry name" value="KARI_C"/>
    <property type="match status" value="1"/>
</dbReference>
<dbReference type="PROSITE" id="PS51850">
    <property type="entry name" value="KARI_N"/>
    <property type="match status" value="1"/>
</dbReference>
<name>ILVC_BREBN</name>